<name>ATPZ_PSEPK</name>
<protein>
    <recommendedName>
        <fullName>ATP synthase protein I</fullName>
    </recommendedName>
</protein>
<gene>
    <name type="primary">atpI</name>
    <name type="synonym">uncI</name>
    <name type="ordered locus">PP_5420</name>
</gene>
<evidence type="ECO:0000250" key="1"/>
<evidence type="ECO:0000255" key="2"/>
<evidence type="ECO:0000305" key="3"/>
<accession>P0A103</accession>
<accession>P25760</accession>
<keyword id="KW-0997">Cell inner membrane</keyword>
<keyword id="KW-1003">Cell membrane</keyword>
<keyword id="KW-0138">CF(0)</keyword>
<keyword id="KW-0375">Hydrogen ion transport</keyword>
<keyword id="KW-0406">Ion transport</keyword>
<keyword id="KW-0472">Membrane</keyword>
<keyword id="KW-1185">Reference proteome</keyword>
<keyword id="KW-0812">Transmembrane</keyword>
<keyword id="KW-1133">Transmembrane helix</keyword>
<keyword id="KW-0813">Transport</keyword>
<organism>
    <name type="scientific">Pseudomonas putida (strain ATCC 47054 / DSM 6125 / CFBP 8728 / NCIMB 11950 / KT2440)</name>
    <dbReference type="NCBI Taxonomy" id="160488"/>
    <lineage>
        <taxon>Bacteria</taxon>
        <taxon>Pseudomonadati</taxon>
        <taxon>Pseudomonadota</taxon>
        <taxon>Gammaproteobacteria</taxon>
        <taxon>Pseudomonadales</taxon>
        <taxon>Pseudomonadaceae</taxon>
        <taxon>Pseudomonas</taxon>
    </lineage>
</organism>
<feature type="chain" id="PRO_0000071710" description="ATP synthase protein I">
    <location>
        <begin position="1"/>
        <end position="135"/>
    </location>
</feature>
<feature type="transmembrane region" description="Helical" evidence="2">
    <location>
        <begin position="14"/>
        <end position="34"/>
    </location>
</feature>
<feature type="transmembrane region" description="Helical" evidence="2">
    <location>
        <begin position="41"/>
        <end position="61"/>
    </location>
</feature>
<feature type="transmembrane region" description="Helical" evidence="2">
    <location>
        <begin position="82"/>
        <end position="102"/>
    </location>
</feature>
<feature type="transmembrane region" description="Helical" evidence="2">
    <location>
        <begin position="108"/>
        <end position="128"/>
    </location>
</feature>
<comment type="function">
    <text evidence="1">A possible function for this protein is to guide the assembly of the membrane sector of the ATPase enzyme complex.</text>
</comment>
<comment type="subcellular location">
    <subcellularLocation>
        <location evidence="3">Cell inner membrane</location>
        <topology evidence="3">Multi-pass membrane protein</topology>
    </subcellularLocation>
</comment>
<comment type="similarity">
    <text evidence="3">Belongs to the bacterial AtpI family.</text>
</comment>
<dbReference type="EMBL" id="AE015451">
    <property type="protein sequence ID" value="AAN70984.1"/>
    <property type="molecule type" value="Genomic_DNA"/>
</dbReference>
<dbReference type="RefSeq" id="NP_747520.1">
    <property type="nucleotide sequence ID" value="NC_002947.4"/>
</dbReference>
<dbReference type="RefSeq" id="WP_010955890.1">
    <property type="nucleotide sequence ID" value="NZ_CP169744.1"/>
</dbReference>
<dbReference type="STRING" id="160488.PP_5420"/>
<dbReference type="PaxDb" id="160488-PP_5420"/>
<dbReference type="KEGG" id="ppu:PP_5420"/>
<dbReference type="eggNOG" id="COG3312">
    <property type="taxonomic scope" value="Bacteria"/>
</dbReference>
<dbReference type="HOGENOM" id="CLU_121415_3_2_6"/>
<dbReference type="OrthoDB" id="5702716at2"/>
<dbReference type="PhylomeDB" id="P0A103"/>
<dbReference type="BioCyc" id="PPUT160488:G1G01-5786-MONOMER"/>
<dbReference type="Proteomes" id="UP000000556">
    <property type="component" value="Chromosome"/>
</dbReference>
<dbReference type="GO" id="GO:0005886">
    <property type="term" value="C:plasma membrane"/>
    <property type="evidence" value="ECO:0007669"/>
    <property type="project" value="UniProtKB-SubCell"/>
</dbReference>
<dbReference type="GO" id="GO:0045259">
    <property type="term" value="C:proton-transporting ATP synthase complex"/>
    <property type="evidence" value="ECO:0007669"/>
    <property type="project" value="UniProtKB-KW"/>
</dbReference>
<dbReference type="GO" id="GO:1902600">
    <property type="term" value="P:proton transmembrane transport"/>
    <property type="evidence" value="ECO:0007669"/>
    <property type="project" value="UniProtKB-KW"/>
</dbReference>
<dbReference type="InterPro" id="IPR005598">
    <property type="entry name" value="ATP_synth_I"/>
</dbReference>
<dbReference type="NCBIfam" id="NF004414">
    <property type="entry name" value="PRK05760.1"/>
    <property type="match status" value="1"/>
</dbReference>
<dbReference type="Pfam" id="PF03899">
    <property type="entry name" value="ATP-synt_I"/>
    <property type="match status" value="1"/>
</dbReference>
<reference key="1">
    <citation type="journal article" date="2002" name="Environ. Microbiol.">
        <title>Complete genome sequence and comparative analysis of the metabolically versatile Pseudomonas putida KT2440.</title>
        <authorList>
            <person name="Nelson K.E."/>
            <person name="Weinel C."/>
            <person name="Paulsen I.T."/>
            <person name="Dodson R.J."/>
            <person name="Hilbert H."/>
            <person name="Martins dos Santos V.A.P."/>
            <person name="Fouts D.E."/>
            <person name="Gill S.R."/>
            <person name="Pop M."/>
            <person name="Holmes M."/>
            <person name="Brinkac L.M."/>
            <person name="Beanan M.J."/>
            <person name="DeBoy R.T."/>
            <person name="Daugherty S.C."/>
            <person name="Kolonay J.F."/>
            <person name="Madupu R."/>
            <person name="Nelson W.C."/>
            <person name="White O."/>
            <person name="Peterson J.D."/>
            <person name="Khouri H.M."/>
            <person name="Hance I."/>
            <person name="Chris Lee P."/>
            <person name="Holtzapple E.K."/>
            <person name="Scanlan D."/>
            <person name="Tran K."/>
            <person name="Moazzez A."/>
            <person name="Utterback T.R."/>
            <person name="Rizzo M."/>
            <person name="Lee K."/>
            <person name="Kosack D."/>
            <person name="Moestl D."/>
            <person name="Wedler H."/>
            <person name="Lauber J."/>
            <person name="Stjepandic D."/>
            <person name="Hoheisel J."/>
            <person name="Straetz M."/>
            <person name="Heim S."/>
            <person name="Kiewitz C."/>
            <person name="Eisen J.A."/>
            <person name="Timmis K.N."/>
            <person name="Duesterhoeft A."/>
            <person name="Tuemmler B."/>
            <person name="Fraser C.M."/>
        </authorList>
    </citation>
    <scope>NUCLEOTIDE SEQUENCE [LARGE SCALE GENOMIC DNA]</scope>
    <source>
        <strain>ATCC 47054 / DSM 6125 / CFBP 8728 / NCIMB 11950 / KT2440</strain>
    </source>
</reference>
<sequence>MEIRTPNRLPFHRWAVFPVLLAQFVVLLLATLVLWQWKGSVSGYSGLCGGLIAWLPNVYFAWKAFRFSGARAAQAIVKSFYAGEAGKMILTAVLFALTFAGVKPLAPLAVFGVFVLTLLVSWFAPLLMNKRLSRP</sequence>
<proteinExistence type="inferred from homology"/>